<name>Y1883_LACH4</name>
<accession>A8YXF1</accession>
<protein>
    <recommendedName>
        <fullName evidence="1">UPF0246 protein lhv_1883</fullName>
    </recommendedName>
</protein>
<feature type="chain" id="PRO_1000072696" description="UPF0246 protein lhv_1883">
    <location>
        <begin position="1"/>
        <end position="253"/>
    </location>
</feature>
<comment type="similarity">
    <text evidence="1">Belongs to the UPF0246 family.</text>
</comment>
<reference key="1">
    <citation type="journal article" date="2008" name="J. Bacteriol.">
        <title>Genome sequence of Lactobacillus helveticus: an organism distinguished by selective gene loss and IS element expansion.</title>
        <authorList>
            <person name="Callanan M."/>
            <person name="Kaleta P."/>
            <person name="O'Callaghan J."/>
            <person name="O'Sullivan O."/>
            <person name="Jordan K."/>
            <person name="McAuliffe O."/>
            <person name="Sangrador-Vegas A."/>
            <person name="Slattery L."/>
            <person name="Fitzgerald G.F."/>
            <person name="Beresford T."/>
            <person name="Ross R.P."/>
        </authorList>
    </citation>
    <scope>NUCLEOTIDE SEQUENCE [LARGE SCALE GENOMIC DNA]</scope>
    <source>
        <strain>DPC 4571</strain>
    </source>
</reference>
<evidence type="ECO:0000255" key="1">
    <source>
        <dbReference type="HAMAP-Rule" id="MF_00652"/>
    </source>
</evidence>
<sequence length="253" mass="30086">MKIIIAPAKIMKIDRDSFPVQSKPEFLDKTRILEEFLKSRSEDQLIELWHASKKVTEQSIEQLKNMNLDKRLTPAILAFSGIQYQYMAPDLFTQPALDYIQKNLRILSGFYGMLRPFDGVCPYRLELNTKMKGFIDYSLYHFWNDQIAESLFKEDDTVINLASKQYMRLVKPYLNENRKMITIDFQELKNDQWKTVGVHAKMARGEMVRFIAENQMKNPAELRDFHDFEFQYSPEASSLDHYVFRTHFDFKRH</sequence>
<organism>
    <name type="scientific">Lactobacillus helveticus (strain DPC 4571)</name>
    <dbReference type="NCBI Taxonomy" id="405566"/>
    <lineage>
        <taxon>Bacteria</taxon>
        <taxon>Bacillati</taxon>
        <taxon>Bacillota</taxon>
        <taxon>Bacilli</taxon>
        <taxon>Lactobacillales</taxon>
        <taxon>Lactobacillaceae</taxon>
        <taxon>Lactobacillus</taxon>
    </lineage>
</organism>
<proteinExistence type="inferred from homology"/>
<gene>
    <name type="ordered locus">lhv_1883</name>
</gene>
<dbReference type="EMBL" id="CP000517">
    <property type="protein sequence ID" value="ABX27729.1"/>
    <property type="molecule type" value="Genomic_DNA"/>
</dbReference>
<dbReference type="SMR" id="A8YXF1"/>
<dbReference type="KEGG" id="lhe:lhv_1883"/>
<dbReference type="eggNOG" id="COG3022">
    <property type="taxonomic scope" value="Bacteria"/>
</dbReference>
<dbReference type="HOGENOM" id="CLU_061989_1_0_9"/>
<dbReference type="Proteomes" id="UP000000790">
    <property type="component" value="Chromosome"/>
</dbReference>
<dbReference type="GO" id="GO:0005829">
    <property type="term" value="C:cytosol"/>
    <property type="evidence" value="ECO:0007669"/>
    <property type="project" value="TreeGrafter"/>
</dbReference>
<dbReference type="GO" id="GO:0033194">
    <property type="term" value="P:response to hydroperoxide"/>
    <property type="evidence" value="ECO:0007669"/>
    <property type="project" value="TreeGrafter"/>
</dbReference>
<dbReference type="HAMAP" id="MF_00652">
    <property type="entry name" value="UPF0246"/>
    <property type="match status" value="1"/>
</dbReference>
<dbReference type="InterPro" id="IPR005583">
    <property type="entry name" value="YaaA"/>
</dbReference>
<dbReference type="NCBIfam" id="NF002543">
    <property type="entry name" value="PRK02101.1-4"/>
    <property type="match status" value="1"/>
</dbReference>
<dbReference type="PANTHER" id="PTHR30283:SF4">
    <property type="entry name" value="PEROXIDE STRESS RESISTANCE PROTEIN YAAA"/>
    <property type="match status" value="1"/>
</dbReference>
<dbReference type="PANTHER" id="PTHR30283">
    <property type="entry name" value="PEROXIDE STRESS RESPONSE PROTEIN YAAA"/>
    <property type="match status" value="1"/>
</dbReference>
<dbReference type="Pfam" id="PF03883">
    <property type="entry name" value="H2O2_YaaD"/>
    <property type="match status" value="1"/>
</dbReference>